<evidence type="ECO:0000255" key="1">
    <source>
        <dbReference type="HAMAP-Rule" id="MF_00017"/>
    </source>
</evidence>
<sequence length="201" mass="21963">MQTSPLLTQLMEALRCLPGVGPKSAQRMAFTLLQRDRSGGMRLAQALTRAMSEIGHCADCRTFTEQEVCNICSNPRRQENGQICVVESPADIYAIEQTGQFSGRYFVLMGHLSPLDGIGPDDIGLDRLEQRLAEEKITEVILATNPTVEGEATANYIAELCAQYDVEASRIAHGVPVGGELEMVDGTTLSHSLAGRHKIRF</sequence>
<protein>
    <recommendedName>
        <fullName evidence="1">Recombination protein RecR</fullName>
    </recommendedName>
</protein>
<accession>B7LLP8</accession>
<reference key="1">
    <citation type="journal article" date="2009" name="PLoS Genet.">
        <title>Organised genome dynamics in the Escherichia coli species results in highly diverse adaptive paths.</title>
        <authorList>
            <person name="Touchon M."/>
            <person name="Hoede C."/>
            <person name="Tenaillon O."/>
            <person name="Barbe V."/>
            <person name="Baeriswyl S."/>
            <person name="Bidet P."/>
            <person name="Bingen E."/>
            <person name="Bonacorsi S."/>
            <person name="Bouchier C."/>
            <person name="Bouvet O."/>
            <person name="Calteau A."/>
            <person name="Chiapello H."/>
            <person name="Clermont O."/>
            <person name="Cruveiller S."/>
            <person name="Danchin A."/>
            <person name="Diard M."/>
            <person name="Dossat C."/>
            <person name="Karoui M.E."/>
            <person name="Frapy E."/>
            <person name="Garry L."/>
            <person name="Ghigo J.M."/>
            <person name="Gilles A.M."/>
            <person name="Johnson J."/>
            <person name="Le Bouguenec C."/>
            <person name="Lescat M."/>
            <person name="Mangenot S."/>
            <person name="Martinez-Jehanne V."/>
            <person name="Matic I."/>
            <person name="Nassif X."/>
            <person name="Oztas S."/>
            <person name="Petit M.A."/>
            <person name="Pichon C."/>
            <person name="Rouy Z."/>
            <person name="Ruf C.S."/>
            <person name="Schneider D."/>
            <person name="Tourret J."/>
            <person name="Vacherie B."/>
            <person name="Vallenet D."/>
            <person name="Medigue C."/>
            <person name="Rocha E.P.C."/>
            <person name="Denamur E."/>
        </authorList>
    </citation>
    <scope>NUCLEOTIDE SEQUENCE [LARGE SCALE GENOMIC DNA]</scope>
    <source>
        <strain>ATCC 35469 / DSM 13698 / BCRC 15582 / CCUG 18766 / IAM 14443 / JCM 21226 / LMG 7866 / NBRC 102419 / NCTC 12128 / CDC 0568-73</strain>
    </source>
</reference>
<comment type="function">
    <text evidence="1">May play a role in DNA repair. It seems to be involved in an RecBC-independent recombinational process of DNA repair. It may act with RecF and RecO.</text>
</comment>
<comment type="similarity">
    <text evidence="1">Belongs to the RecR family.</text>
</comment>
<keyword id="KW-0227">DNA damage</keyword>
<keyword id="KW-0233">DNA recombination</keyword>
<keyword id="KW-0234">DNA repair</keyword>
<keyword id="KW-0479">Metal-binding</keyword>
<keyword id="KW-0862">Zinc</keyword>
<keyword id="KW-0863">Zinc-finger</keyword>
<organism>
    <name type="scientific">Escherichia fergusonii (strain ATCC 35469 / DSM 13698 / CCUG 18766 / IAM 14443 / JCM 21226 / LMG 7866 / NBRC 102419 / NCTC 12128 / CDC 0568-73)</name>
    <dbReference type="NCBI Taxonomy" id="585054"/>
    <lineage>
        <taxon>Bacteria</taxon>
        <taxon>Pseudomonadati</taxon>
        <taxon>Pseudomonadota</taxon>
        <taxon>Gammaproteobacteria</taxon>
        <taxon>Enterobacterales</taxon>
        <taxon>Enterobacteriaceae</taxon>
        <taxon>Escherichia</taxon>
    </lineage>
</organism>
<proteinExistence type="inferred from homology"/>
<name>RECR_ESCF3</name>
<feature type="chain" id="PRO_1000195390" description="Recombination protein RecR">
    <location>
        <begin position="1"/>
        <end position="201"/>
    </location>
</feature>
<feature type="domain" description="Toprim" evidence="1">
    <location>
        <begin position="81"/>
        <end position="176"/>
    </location>
</feature>
<feature type="zinc finger region" description="C4-type" evidence="1">
    <location>
        <begin position="57"/>
        <end position="72"/>
    </location>
</feature>
<gene>
    <name evidence="1" type="primary">recR</name>
    <name type="ordered locus">EFER_2545</name>
</gene>
<dbReference type="EMBL" id="CU928158">
    <property type="protein sequence ID" value="CAQ90040.1"/>
    <property type="molecule type" value="Genomic_DNA"/>
</dbReference>
<dbReference type="RefSeq" id="WP_001195025.1">
    <property type="nucleotide sequence ID" value="NC_011740.1"/>
</dbReference>
<dbReference type="SMR" id="B7LLP8"/>
<dbReference type="GeneID" id="93776978"/>
<dbReference type="KEGG" id="efe:EFER_2545"/>
<dbReference type="HOGENOM" id="CLU_060739_1_2_6"/>
<dbReference type="OrthoDB" id="9802672at2"/>
<dbReference type="Proteomes" id="UP000000745">
    <property type="component" value="Chromosome"/>
</dbReference>
<dbReference type="GO" id="GO:0003677">
    <property type="term" value="F:DNA binding"/>
    <property type="evidence" value="ECO:0007669"/>
    <property type="project" value="UniProtKB-UniRule"/>
</dbReference>
<dbReference type="GO" id="GO:0008270">
    <property type="term" value="F:zinc ion binding"/>
    <property type="evidence" value="ECO:0007669"/>
    <property type="project" value="UniProtKB-KW"/>
</dbReference>
<dbReference type="GO" id="GO:0006310">
    <property type="term" value="P:DNA recombination"/>
    <property type="evidence" value="ECO:0007669"/>
    <property type="project" value="UniProtKB-UniRule"/>
</dbReference>
<dbReference type="GO" id="GO:0006281">
    <property type="term" value="P:DNA repair"/>
    <property type="evidence" value="ECO:0007669"/>
    <property type="project" value="UniProtKB-UniRule"/>
</dbReference>
<dbReference type="CDD" id="cd01025">
    <property type="entry name" value="TOPRIM_recR"/>
    <property type="match status" value="1"/>
</dbReference>
<dbReference type="FunFam" id="1.10.8.420:FF:000001">
    <property type="entry name" value="Recombination protein RecR"/>
    <property type="match status" value="1"/>
</dbReference>
<dbReference type="FunFam" id="3.40.1360.10:FF:000001">
    <property type="entry name" value="Recombination protein RecR"/>
    <property type="match status" value="1"/>
</dbReference>
<dbReference type="Gene3D" id="3.40.1360.10">
    <property type="match status" value="1"/>
</dbReference>
<dbReference type="Gene3D" id="6.10.250.240">
    <property type="match status" value="1"/>
</dbReference>
<dbReference type="Gene3D" id="1.10.8.420">
    <property type="entry name" value="RecR Domain 1"/>
    <property type="match status" value="1"/>
</dbReference>
<dbReference type="HAMAP" id="MF_00017">
    <property type="entry name" value="RecR"/>
    <property type="match status" value="1"/>
</dbReference>
<dbReference type="InterPro" id="IPR000093">
    <property type="entry name" value="DNA_Rcmb_RecR"/>
</dbReference>
<dbReference type="InterPro" id="IPR023627">
    <property type="entry name" value="Rcmb_RecR"/>
</dbReference>
<dbReference type="InterPro" id="IPR015967">
    <property type="entry name" value="Rcmb_RecR_Znf"/>
</dbReference>
<dbReference type="InterPro" id="IPR006171">
    <property type="entry name" value="TOPRIM_dom"/>
</dbReference>
<dbReference type="InterPro" id="IPR034137">
    <property type="entry name" value="TOPRIM_RecR"/>
</dbReference>
<dbReference type="NCBIfam" id="TIGR00615">
    <property type="entry name" value="recR"/>
    <property type="match status" value="1"/>
</dbReference>
<dbReference type="PANTHER" id="PTHR30446">
    <property type="entry name" value="RECOMBINATION PROTEIN RECR"/>
    <property type="match status" value="1"/>
</dbReference>
<dbReference type="PANTHER" id="PTHR30446:SF0">
    <property type="entry name" value="RECOMBINATION PROTEIN RECR"/>
    <property type="match status" value="1"/>
</dbReference>
<dbReference type="Pfam" id="PF21175">
    <property type="entry name" value="RecR_C"/>
    <property type="match status" value="1"/>
</dbReference>
<dbReference type="Pfam" id="PF21176">
    <property type="entry name" value="RecR_HhH"/>
    <property type="match status" value="1"/>
</dbReference>
<dbReference type="Pfam" id="PF02132">
    <property type="entry name" value="RecR_ZnF"/>
    <property type="match status" value="1"/>
</dbReference>
<dbReference type="Pfam" id="PF13662">
    <property type="entry name" value="Toprim_4"/>
    <property type="match status" value="1"/>
</dbReference>
<dbReference type="SMART" id="SM00493">
    <property type="entry name" value="TOPRIM"/>
    <property type="match status" value="1"/>
</dbReference>
<dbReference type="SUPFAM" id="SSF111304">
    <property type="entry name" value="Recombination protein RecR"/>
    <property type="match status" value="1"/>
</dbReference>
<dbReference type="PROSITE" id="PS01300">
    <property type="entry name" value="RECR"/>
    <property type="match status" value="1"/>
</dbReference>
<dbReference type="PROSITE" id="PS50880">
    <property type="entry name" value="TOPRIM"/>
    <property type="match status" value="1"/>
</dbReference>